<dbReference type="EC" id="2.7.1.11" evidence="1"/>
<dbReference type="EMBL" id="BA000017">
    <property type="protein sequence ID" value="BAB57860.1"/>
    <property type="status" value="ALT_INIT"/>
    <property type="molecule type" value="Genomic_DNA"/>
</dbReference>
<dbReference type="RefSeq" id="WP_000717561.1">
    <property type="nucleotide sequence ID" value="NC_002758.2"/>
</dbReference>
<dbReference type="SMR" id="P65694"/>
<dbReference type="KEGG" id="sav:SAV1698"/>
<dbReference type="HOGENOM" id="CLU_020655_0_1_9"/>
<dbReference type="UniPathway" id="UPA00109">
    <property type="reaction ID" value="UER00182"/>
</dbReference>
<dbReference type="Proteomes" id="UP000002481">
    <property type="component" value="Chromosome"/>
</dbReference>
<dbReference type="GO" id="GO:0005945">
    <property type="term" value="C:6-phosphofructokinase complex"/>
    <property type="evidence" value="ECO:0007669"/>
    <property type="project" value="TreeGrafter"/>
</dbReference>
<dbReference type="GO" id="GO:0003872">
    <property type="term" value="F:6-phosphofructokinase activity"/>
    <property type="evidence" value="ECO:0007669"/>
    <property type="project" value="UniProtKB-UniRule"/>
</dbReference>
<dbReference type="GO" id="GO:0016208">
    <property type="term" value="F:AMP binding"/>
    <property type="evidence" value="ECO:0007669"/>
    <property type="project" value="TreeGrafter"/>
</dbReference>
<dbReference type="GO" id="GO:0005524">
    <property type="term" value="F:ATP binding"/>
    <property type="evidence" value="ECO:0007669"/>
    <property type="project" value="UniProtKB-KW"/>
</dbReference>
<dbReference type="GO" id="GO:0070095">
    <property type="term" value="F:fructose-6-phosphate binding"/>
    <property type="evidence" value="ECO:0007669"/>
    <property type="project" value="TreeGrafter"/>
</dbReference>
<dbReference type="GO" id="GO:0042802">
    <property type="term" value="F:identical protein binding"/>
    <property type="evidence" value="ECO:0007669"/>
    <property type="project" value="TreeGrafter"/>
</dbReference>
<dbReference type="GO" id="GO:0046872">
    <property type="term" value="F:metal ion binding"/>
    <property type="evidence" value="ECO:0007669"/>
    <property type="project" value="UniProtKB-KW"/>
</dbReference>
<dbReference type="GO" id="GO:0048029">
    <property type="term" value="F:monosaccharide binding"/>
    <property type="evidence" value="ECO:0007669"/>
    <property type="project" value="TreeGrafter"/>
</dbReference>
<dbReference type="GO" id="GO:0061621">
    <property type="term" value="P:canonical glycolysis"/>
    <property type="evidence" value="ECO:0007669"/>
    <property type="project" value="TreeGrafter"/>
</dbReference>
<dbReference type="GO" id="GO:0030388">
    <property type="term" value="P:fructose 1,6-bisphosphate metabolic process"/>
    <property type="evidence" value="ECO:0007669"/>
    <property type="project" value="TreeGrafter"/>
</dbReference>
<dbReference type="GO" id="GO:0006002">
    <property type="term" value="P:fructose 6-phosphate metabolic process"/>
    <property type="evidence" value="ECO:0007669"/>
    <property type="project" value="InterPro"/>
</dbReference>
<dbReference type="FunFam" id="3.40.50.450:FF:000001">
    <property type="entry name" value="ATP-dependent 6-phosphofructokinase"/>
    <property type="match status" value="1"/>
</dbReference>
<dbReference type="FunFam" id="3.40.50.460:FF:000002">
    <property type="entry name" value="ATP-dependent 6-phosphofructokinase"/>
    <property type="match status" value="1"/>
</dbReference>
<dbReference type="Gene3D" id="3.40.50.450">
    <property type="match status" value="1"/>
</dbReference>
<dbReference type="Gene3D" id="3.40.50.460">
    <property type="entry name" value="Phosphofructokinase domain"/>
    <property type="match status" value="1"/>
</dbReference>
<dbReference type="HAMAP" id="MF_00339">
    <property type="entry name" value="Phosphofructokinase_I_B1"/>
    <property type="match status" value="1"/>
</dbReference>
<dbReference type="InterPro" id="IPR022953">
    <property type="entry name" value="ATP_PFK"/>
</dbReference>
<dbReference type="InterPro" id="IPR012003">
    <property type="entry name" value="ATP_PFK_prok-type"/>
</dbReference>
<dbReference type="InterPro" id="IPR012828">
    <property type="entry name" value="PFKA_ATP_prok"/>
</dbReference>
<dbReference type="InterPro" id="IPR015912">
    <property type="entry name" value="Phosphofructokinase_CS"/>
</dbReference>
<dbReference type="InterPro" id="IPR000023">
    <property type="entry name" value="Phosphofructokinase_dom"/>
</dbReference>
<dbReference type="InterPro" id="IPR035966">
    <property type="entry name" value="PKF_sf"/>
</dbReference>
<dbReference type="NCBIfam" id="TIGR02482">
    <property type="entry name" value="PFKA_ATP"/>
    <property type="match status" value="1"/>
</dbReference>
<dbReference type="NCBIfam" id="NF002872">
    <property type="entry name" value="PRK03202.1"/>
    <property type="match status" value="1"/>
</dbReference>
<dbReference type="PANTHER" id="PTHR13697:SF4">
    <property type="entry name" value="ATP-DEPENDENT 6-PHOSPHOFRUCTOKINASE"/>
    <property type="match status" value="1"/>
</dbReference>
<dbReference type="PANTHER" id="PTHR13697">
    <property type="entry name" value="PHOSPHOFRUCTOKINASE"/>
    <property type="match status" value="1"/>
</dbReference>
<dbReference type="Pfam" id="PF00365">
    <property type="entry name" value="PFK"/>
    <property type="match status" value="1"/>
</dbReference>
<dbReference type="PIRSF" id="PIRSF000532">
    <property type="entry name" value="ATP_PFK_prok"/>
    <property type="match status" value="1"/>
</dbReference>
<dbReference type="PRINTS" id="PR00476">
    <property type="entry name" value="PHFRCTKINASE"/>
</dbReference>
<dbReference type="SUPFAM" id="SSF53784">
    <property type="entry name" value="Phosphofructokinase"/>
    <property type="match status" value="1"/>
</dbReference>
<dbReference type="PROSITE" id="PS00433">
    <property type="entry name" value="PHOSPHOFRUCTOKINASE"/>
    <property type="match status" value="1"/>
</dbReference>
<feature type="chain" id="PRO_0000111977" description="ATP-dependent 6-phosphofructokinase">
    <location>
        <begin position="1"/>
        <end position="322"/>
    </location>
</feature>
<feature type="active site" description="Proton acceptor" evidence="1">
    <location>
        <position position="129"/>
    </location>
</feature>
<feature type="binding site" evidence="1">
    <location>
        <position position="11"/>
    </location>
    <ligand>
        <name>ATP</name>
        <dbReference type="ChEBI" id="CHEBI:30616"/>
    </ligand>
</feature>
<feature type="binding site" evidence="1">
    <location>
        <begin position="21"/>
        <end position="25"/>
    </location>
    <ligand>
        <name>ADP</name>
        <dbReference type="ChEBI" id="CHEBI:456216"/>
        <note>allosteric activator; ligand shared between dimeric partners</note>
    </ligand>
</feature>
<feature type="binding site" evidence="1">
    <location>
        <begin position="72"/>
        <end position="73"/>
    </location>
    <ligand>
        <name>ATP</name>
        <dbReference type="ChEBI" id="CHEBI:30616"/>
    </ligand>
</feature>
<feature type="binding site" evidence="1">
    <location>
        <begin position="102"/>
        <end position="105"/>
    </location>
    <ligand>
        <name>ATP</name>
        <dbReference type="ChEBI" id="CHEBI:30616"/>
    </ligand>
</feature>
<feature type="binding site" evidence="1">
    <location>
        <position position="103"/>
    </location>
    <ligand>
        <name>Mg(2+)</name>
        <dbReference type="ChEBI" id="CHEBI:18420"/>
        <note>catalytic</note>
    </ligand>
</feature>
<feature type="binding site" description="in other chain" evidence="1">
    <location>
        <begin position="127"/>
        <end position="129"/>
    </location>
    <ligand>
        <name>substrate</name>
        <note>ligand shared between dimeric partners</note>
    </ligand>
</feature>
<feature type="binding site" description="in other chain" evidence="1">
    <location>
        <position position="156"/>
    </location>
    <ligand>
        <name>ADP</name>
        <dbReference type="ChEBI" id="CHEBI:456216"/>
        <note>allosteric activator; ligand shared between dimeric partners</note>
    </ligand>
</feature>
<feature type="binding site" evidence="1">
    <location>
        <position position="164"/>
    </location>
    <ligand>
        <name>substrate</name>
        <note>ligand shared between dimeric partners</note>
    </ligand>
</feature>
<feature type="binding site" description="in other chain" evidence="1">
    <location>
        <begin position="171"/>
        <end position="173"/>
    </location>
    <ligand>
        <name>substrate</name>
        <note>ligand shared between dimeric partners</note>
    </ligand>
</feature>
<feature type="binding site" description="in other chain" evidence="1">
    <location>
        <begin position="187"/>
        <end position="189"/>
    </location>
    <ligand>
        <name>ADP</name>
        <dbReference type="ChEBI" id="CHEBI:456216"/>
        <note>allosteric activator; ligand shared between dimeric partners</note>
    </ligand>
</feature>
<feature type="binding site" description="in other chain" evidence="1">
    <location>
        <position position="213"/>
    </location>
    <ligand>
        <name>ADP</name>
        <dbReference type="ChEBI" id="CHEBI:456216"/>
        <note>allosteric activator; ligand shared between dimeric partners</note>
    </ligand>
</feature>
<feature type="binding site" description="in other chain" evidence="1">
    <location>
        <begin position="215"/>
        <end position="217"/>
    </location>
    <ligand>
        <name>ADP</name>
        <dbReference type="ChEBI" id="CHEBI:456216"/>
        <note>allosteric activator; ligand shared between dimeric partners</note>
    </ligand>
</feature>
<feature type="binding site" description="in other chain" evidence="1">
    <location>
        <position position="224"/>
    </location>
    <ligand>
        <name>substrate</name>
        <note>ligand shared between dimeric partners</note>
    </ligand>
</feature>
<feature type="binding site" evidence="1">
    <location>
        <position position="245"/>
    </location>
    <ligand>
        <name>substrate</name>
        <note>ligand shared between dimeric partners</note>
    </ligand>
</feature>
<feature type="binding site" description="in other chain" evidence="1">
    <location>
        <begin position="251"/>
        <end position="254"/>
    </location>
    <ligand>
        <name>substrate</name>
        <note>ligand shared between dimeric partners</note>
    </ligand>
</feature>
<protein>
    <recommendedName>
        <fullName evidence="1">ATP-dependent 6-phosphofructokinase</fullName>
        <shortName evidence="1">ATP-PFK</shortName>
        <shortName evidence="1">Phosphofructokinase</shortName>
        <ecNumber evidence="1">2.7.1.11</ecNumber>
    </recommendedName>
    <alternativeName>
        <fullName evidence="1">Phosphohexokinase</fullName>
    </alternativeName>
</protein>
<reference key="1">
    <citation type="journal article" date="2001" name="Lancet">
        <title>Whole genome sequencing of meticillin-resistant Staphylococcus aureus.</title>
        <authorList>
            <person name="Kuroda M."/>
            <person name="Ohta T."/>
            <person name="Uchiyama I."/>
            <person name="Baba T."/>
            <person name="Yuzawa H."/>
            <person name="Kobayashi I."/>
            <person name="Cui L."/>
            <person name="Oguchi A."/>
            <person name="Aoki K."/>
            <person name="Nagai Y."/>
            <person name="Lian J.-Q."/>
            <person name="Ito T."/>
            <person name="Kanamori M."/>
            <person name="Matsumaru H."/>
            <person name="Maruyama A."/>
            <person name="Murakami H."/>
            <person name="Hosoyama A."/>
            <person name="Mizutani-Ui Y."/>
            <person name="Takahashi N.K."/>
            <person name="Sawano T."/>
            <person name="Inoue R."/>
            <person name="Kaito C."/>
            <person name="Sekimizu K."/>
            <person name="Hirakawa H."/>
            <person name="Kuhara S."/>
            <person name="Goto S."/>
            <person name="Yabuzaki J."/>
            <person name="Kanehisa M."/>
            <person name="Yamashita A."/>
            <person name="Oshima K."/>
            <person name="Furuya K."/>
            <person name="Yoshino C."/>
            <person name="Shiba T."/>
            <person name="Hattori M."/>
            <person name="Ogasawara N."/>
            <person name="Hayashi H."/>
            <person name="Hiramatsu K."/>
        </authorList>
    </citation>
    <scope>NUCLEOTIDE SEQUENCE [LARGE SCALE GENOMIC DNA]</scope>
    <source>
        <strain>Mu50 / ATCC 700699</strain>
    </source>
</reference>
<gene>
    <name evidence="1" type="primary">pfkA</name>
    <name type="synonym">pfk</name>
    <name type="ordered locus">SAV1698</name>
</gene>
<keyword id="KW-0021">Allosteric enzyme</keyword>
<keyword id="KW-0067">ATP-binding</keyword>
<keyword id="KW-0963">Cytoplasm</keyword>
<keyword id="KW-0324">Glycolysis</keyword>
<keyword id="KW-0418">Kinase</keyword>
<keyword id="KW-0460">Magnesium</keyword>
<keyword id="KW-0479">Metal-binding</keyword>
<keyword id="KW-0547">Nucleotide-binding</keyword>
<keyword id="KW-0808">Transferase</keyword>
<name>PFKA_STAAM</name>
<comment type="function">
    <text evidence="1">Catalyzes the phosphorylation of D-fructose 6-phosphate to fructose 1,6-bisphosphate by ATP, the first committing step of glycolysis.</text>
</comment>
<comment type="catalytic activity">
    <reaction evidence="1">
        <text>beta-D-fructose 6-phosphate + ATP = beta-D-fructose 1,6-bisphosphate + ADP + H(+)</text>
        <dbReference type="Rhea" id="RHEA:16109"/>
        <dbReference type="ChEBI" id="CHEBI:15378"/>
        <dbReference type="ChEBI" id="CHEBI:30616"/>
        <dbReference type="ChEBI" id="CHEBI:32966"/>
        <dbReference type="ChEBI" id="CHEBI:57634"/>
        <dbReference type="ChEBI" id="CHEBI:456216"/>
        <dbReference type="EC" id="2.7.1.11"/>
    </reaction>
</comment>
<comment type="cofactor">
    <cofactor evidence="1">
        <name>Mg(2+)</name>
        <dbReference type="ChEBI" id="CHEBI:18420"/>
    </cofactor>
</comment>
<comment type="activity regulation">
    <text evidence="1">Allosterically activated by ADP and other diphosphonucleosides, and allosterically inhibited by phosphoenolpyruvate.</text>
</comment>
<comment type="pathway">
    <text evidence="1">Carbohydrate degradation; glycolysis; D-glyceraldehyde 3-phosphate and glycerone phosphate from D-glucose: step 3/4.</text>
</comment>
<comment type="subunit">
    <text evidence="1">Homotetramer.</text>
</comment>
<comment type="subcellular location">
    <subcellularLocation>
        <location evidence="1">Cytoplasm</location>
    </subcellularLocation>
</comment>
<comment type="similarity">
    <text evidence="1">Belongs to the phosphofructokinase type A (PFKA) family. ATP-dependent PFK group I subfamily. Prokaryotic clade 'B1' sub-subfamily.</text>
</comment>
<comment type="sequence caution" evidence="2">
    <conflict type="erroneous initiation">
        <sequence resource="EMBL-CDS" id="BAB57860"/>
    </conflict>
</comment>
<accession>P65694</accession>
<accession>Q99TG4</accession>
<sequence length="322" mass="34840">MKKIAVLTSGGDSPGMNAAVRAVVRTAIYNEIEVYGVYHGYQGLLNDDIHKLELGSVGDTIQRGGTFLYSARCPEFKEQEVRKVAIENLRKRGIEGLVVIGGDGSYRGAQRISEECKEIQTIGIPGTIDNDINGTDFTIGFDTALNTIIGLVDKIRDTASSHARTFIIEAMGRDCGDLALWAGLSVGAETIVVPEVKTDIKEIADKIEQGIKRGKKHSIVLVAEGCMTAQDCQKELSQYINVDNRVSVLGHVQRGGSPTGADRVLASRLGGYAVDLLMQGETAKGVGIKNNKIVATSFDEIFDGKDHKFDYSLYELANKLSI</sequence>
<proteinExistence type="inferred from homology"/>
<organism>
    <name type="scientific">Staphylococcus aureus (strain Mu50 / ATCC 700699)</name>
    <dbReference type="NCBI Taxonomy" id="158878"/>
    <lineage>
        <taxon>Bacteria</taxon>
        <taxon>Bacillati</taxon>
        <taxon>Bacillota</taxon>
        <taxon>Bacilli</taxon>
        <taxon>Bacillales</taxon>
        <taxon>Staphylococcaceae</taxon>
        <taxon>Staphylococcus</taxon>
    </lineage>
</organism>
<evidence type="ECO:0000255" key="1">
    <source>
        <dbReference type="HAMAP-Rule" id="MF_00339"/>
    </source>
</evidence>
<evidence type="ECO:0000305" key="2"/>